<evidence type="ECO:0000255" key="1">
    <source>
        <dbReference type="HAMAP-Rule" id="MF_00382"/>
    </source>
</evidence>
<evidence type="ECO:0000305" key="2"/>
<reference key="1">
    <citation type="submission" date="2007-12" db="EMBL/GenBank/DDBJ databases">
        <title>Brucella suis ATCC 23445 whole genome shotgun sequencing project.</title>
        <authorList>
            <person name="Setubal J.C."/>
            <person name="Bowns C."/>
            <person name="Boyle S."/>
            <person name="Crasta O.R."/>
            <person name="Czar M.J."/>
            <person name="Dharmanolla C."/>
            <person name="Gillespie J.J."/>
            <person name="Kenyon R.W."/>
            <person name="Lu J."/>
            <person name="Mane S."/>
            <person name="Mohapatra S."/>
            <person name="Nagrani S."/>
            <person name="Purkayastha A."/>
            <person name="Rajasimha H.K."/>
            <person name="Shallom J.M."/>
            <person name="Shallom S."/>
            <person name="Shukla M."/>
            <person name="Snyder E.E."/>
            <person name="Sobral B.W."/>
            <person name="Wattam A.R."/>
            <person name="Will R."/>
            <person name="Williams K."/>
            <person name="Yoo H."/>
            <person name="Bruce D."/>
            <person name="Detter C."/>
            <person name="Munk C."/>
            <person name="Brettin T.S."/>
        </authorList>
    </citation>
    <scope>NUCLEOTIDE SEQUENCE [LARGE SCALE GENOMIC DNA]</scope>
    <source>
        <strain>ATCC 23445 / NCTC 10510</strain>
    </source>
</reference>
<dbReference type="EMBL" id="CP000911">
    <property type="protein sequence ID" value="ABY38970.1"/>
    <property type="molecule type" value="Genomic_DNA"/>
</dbReference>
<dbReference type="RefSeq" id="WP_002965185.1">
    <property type="nucleotide sequence ID" value="NC_010169.1"/>
</dbReference>
<dbReference type="SMR" id="B0CJL8"/>
<dbReference type="GeneID" id="97534622"/>
<dbReference type="KEGG" id="bmt:BSUIS_A1960"/>
<dbReference type="HOGENOM" id="CLU_123265_0_1_5"/>
<dbReference type="Proteomes" id="UP000008545">
    <property type="component" value="Chromosome I"/>
</dbReference>
<dbReference type="GO" id="GO:1990904">
    <property type="term" value="C:ribonucleoprotein complex"/>
    <property type="evidence" value="ECO:0007669"/>
    <property type="project" value="UniProtKB-KW"/>
</dbReference>
<dbReference type="GO" id="GO:0005840">
    <property type="term" value="C:ribosome"/>
    <property type="evidence" value="ECO:0007669"/>
    <property type="project" value="UniProtKB-KW"/>
</dbReference>
<dbReference type="GO" id="GO:0019843">
    <property type="term" value="F:rRNA binding"/>
    <property type="evidence" value="ECO:0007669"/>
    <property type="project" value="UniProtKB-UniRule"/>
</dbReference>
<dbReference type="GO" id="GO:0003735">
    <property type="term" value="F:structural constituent of ribosome"/>
    <property type="evidence" value="ECO:0007669"/>
    <property type="project" value="InterPro"/>
</dbReference>
<dbReference type="GO" id="GO:0000027">
    <property type="term" value="P:ribosomal large subunit assembly"/>
    <property type="evidence" value="ECO:0007669"/>
    <property type="project" value="UniProtKB-UniRule"/>
</dbReference>
<dbReference type="GO" id="GO:0006412">
    <property type="term" value="P:translation"/>
    <property type="evidence" value="ECO:0007669"/>
    <property type="project" value="InterPro"/>
</dbReference>
<dbReference type="CDD" id="cd07026">
    <property type="entry name" value="Ribosomal_L20"/>
    <property type="match status" value="1"/>
</dbReference>
<dbReference type="FunFam" id="1.10.1900.20:FF:000001">
    <property type="entry name" value="50S ribosomal protein L20"/>
    <property type="match status" value="1"/>
</dbReference>
<dbReference type="Gene3D" id="6.10.160.10">
    <property type="match status" value="1"/>
</dbReference>
<dbReference type="Gene3D" id="1.10.1900.20">
    <property type="entry name" value="Ribosomal protein L20"/>
    <property type="match status" value="1"/>
</dbReference>
<dbReference type="HAMAP" id="MF_00382">
    <property type="entry name" value="Ribosomal_bL20"/>
    <property type="match status" value="1"/>
</dbReference>
<dbReference type="InterPro" id="IPR005813">
    <property type="entry name" value="Ribosomal_bL20"/>
</dbReference>
<dbReference type="InterPro" id="IPR049946">
    <property type="entry name" value="RIBOSOMAL_L20_CS"/>
</dbReference>
<dbReference type="InterPro" id="IPR035566">
    <property type="entry name" value="Ribosomal_protein_bL20_C"/>
</dbReference>
<dbReference type="NCBIfam" id="TIGR01032">
    <property type="entry name" value="rplT_bact"/>
    <property type="match status" value="1"/>
</dbReference>
<dbReference type="PANTHER" id="PTHR10986">
    <property type="entry name" value="39S RIBOSOMAL PROTEIN L20"/>
    <property type="match status" value="1"/>
</dbReference>
<dbReference type="Pfam" id="PF00453">
    <property type="entry name" value="Ribosomal_L20"/>
    <property type="match status" value="1"/>
</dbReference>
<dbReference type="PRINTS" id="PR00062">
    <property type="entry name" value="RIBOSOMALL20"/>
</dbReference>
<dbReference type="SUPFAM" id="SSF74731">
    <property type="entry name" value="Ribosomal protein L20"/>
    <property type="match status" value="1"/>
</dbReference>
<dbReference type="PROSITE" id="PS00937">
    <property type="entry name" value="RIBOSOMAL_L20"/>
    <property type="match status" value="1"/>
</dbReference>
<name>RL20_BRUSI</name>
<proteinExistence type="inferred from homology"/>
<keyword id="KW-0687">Ribonucleoprotein</keyword>
<keyword id="KW-0689">Ribosomal protein</keyword>
<keyword id="KW-0694">RNA-binding</keyword>
<keyword id="KW-0699">rRNA-binding</keyword>
<feature type="chain" id="PRO_1000080060" description="Large ribosomal subunit protein bL20">
    <location>
        <begin position="1"/>
        <end position="134"/>
    </location>
</feature>
<sequence>MARVKRGVTAHAKHKKVLDQAAGFRGRRKNTIRTAKAAVDRSKQYAYRDRKNRKRSFRALWIQRINAAVREQGLTYGRFIDGLAKAGIEIDRKVLSDIAIHEPEAFAALVASAKKALEYLKNTSMPNAFEGAVR</sequence>
<protein>
    <recommendedName>
        <fullName evidence="1">Large ribosomal subunit protein bL20</fullName>
    </recommendedName>
    <alternativeName>
        <fullName evidence="2">50S ribosomal protein L20</fullName>
    </alternativeName>
</protein>
<gene>
    <name evidence="1" type="primary">rplT</name>
    <name type="ordered locus">BSUIS_A1960</name>
</gene>
<organism>
    <name type="scientific">Brucella suis (strain ATCC 23445 / NCTC 10510)</name>
    <dbReference type="NCBI Taxonomy" id="470137"/>
    <lineage>
        <taxon>Bacteria</taxon>
        <taxon>Pseudomonadati</taxon>
        <taxon>Pseudomonadota</taxon>
        <taxon>Alphaproteobacteria</taxon>
        <taxon>Hyphomicrobiales</taxon>
        <taxon>Brucellaceae</taxon>
        <taxon>Brucella/Ochrobactrum group</taxon>
        <taxon>Brucella</taxon>
    </lineage>
</organism>
<accession>B0CJL8</accession>
<comment type="function">
    <text evidence="1">Binds directly to 23S ribosomal RNA and is necessary for the in vitro assembly process of the 50S ribosomal subunit. It is not involved in the protein synthesizing functions of that subunit.</text>
</comment>
<comment type="similarity">
    <text evidence="1">Belongs to the bacterial ribosomal protein bL20 family.</text>
</comment>